<gene>
    <name type="ordered locus">Os02g0683500</name>
    <name type="ordered locus">LOC_Os02g45850</name>
    <name type="ORF">OJ1123_G04.23</name>
</gene>
<protein>
    <recommendedName>
        <fullName>B3 domain-containing protein Os02g0683500</fullName>
    </recommendedName>
</protein>
<feature type="chain" id="PRO_0000376949" description="B3 domain-containing protein Os02g0683500">
    <location>
        <begin position="1"/>
        <end position="412"/>
    </location>
</feature>
<feature type="DNA-binding region" description="TF-B3" evidence="1">
    <location>
        <begin position="96"/>
        <end position="200"/>
    </location>
</feature>
<feature type="region of interest" description="Disordered" evidence="2">
    <location>
        <begin position="1"/>
        <end position="87"/>
    </location>
</feature>
<feature type="region of interest" description="Disordered" evidence="2">
    <location>
        <begin position="374"/>
        <end position="412"/>
    </location>
</feature>
<feature type="compositionally biased region" description="Low complexity" evidence="2">
    <location>
        <begin position="30"/>
        <end position="65"/>
    </location>
</feature>
<feature type="compositionally biased region" description="Gly residues" evidence="2">
    <location>
        <begin position="73"/>
        <end position="86"/>
    </location>
</feature>
<feature type="compositionally biased region" description="Low complexity" evidence="2">
    <location>
        <begin position="387"/>
        <end position="399"/>
    </location>
</feature>
<feature type="compositionally biased region" description="Basic and acidic residues" evidence="2">
    <location>
        <begin position="400"/>
        <end position="412"/>
    </location>
</feature>
<sequence length="412" mass="43948">MEFTTSSRFSKEEEDEEQDEAGRREIPFMTATAEAAPAPTSSSSSPAHHAASASASASASGSSTPFRSDDGAGASGSGGGGGGGGEAEVVEKEHMFDKVVTPSDVGKLNRLVIPKQYAEKYFPLDAAANEKGLLLNFEDRAGKPWRFRYSYWNSSQSYVMTKGWSRFVKEKRLDAGDTVSFSRGIGDEAARHRLFIDWKRRADTRDPLRLPRGLPLPMPLTSHYAPWGIGGGGGFFVQPSPPATLYEHRLRQGLDFRAFNPAAAMGRQVLLFGSARIPPQAPLLARAPSPLHHHYTLQPSGDGVRAAGSPVVLDSVPVIESPTTAAKRVRLFGVNLDNPHAGGGGGAAAGESSNHGNALSLQTPAWMRRDPTLRLLELPPHHHHGAESSAASSPSSSSSSKRDAHSALDLDL</sequence>
<reference key="1">
    <citation type="journal article" date="2005" name="Nature">
        <title>The map-based sequence of the rice genome.</title>
        <authorList>
            <consortium name="International rice genome sequencing project (IRGSP)"/>
        </authorList>
    </citation>
    <scope>NUCLEOTIDE SEQUENCE [LARGE SCALE GENOMIC DNA]</scope>
    <source>
        <strain>cv. Nipponbare</strain>
    </source>
</reference>
<reference key="2">
    <citation type="journal article" date="2008" name="Nucleic Acids Res.">
        <title>The rice annotation project database (RAP-DB): 2008 update.</title>
        <authorList>
            <consortium name="The rice annotation project (RAP)"/>
        </authorList>
    </citation>
    <scope>GENOME REANNOTATION</scope>
    <source>
        <strain>cv. Nipponbare</strain>
    </source>
</reference>
<reference key="3">
    <citation type="journal article" date="2013" name="Rice">
        <title>Improvement of the Oryza sativa Nipponbare reference genome using next generation sequence and optical map data.</title>
        <authorList>
            <person name="Kawahara Y."/>
            <person name="de la Bastide M."/>
            <person name="Hamilton J.P."/>
            <person name="Kanamori H."/>
            <person name="McCombie W.R."/>
            <person name="Ouyang S."/>
            <person name="Schwartz D.C."/>
            <person name="Tanaka T."/>
            <person name="Wu J."/>
            <person name="Zhou S."/>
            <person name="Childs K.L."/>
            <person name="Davidson R.M."/>
            <person name="Lin H."/>
            <person name="Quesada-Ocampo L."/>
            <person name="Vaillancourt B."/>
            <person name="Sakai H."/>
            <person name="Lee S.S."/>
            <person name="Kim J."/>
            <person name="Numa H."/>
            <person name="Itoh T."/>
            <person name="Buell C.R."/>
            <person name="Matsumoto T."/>
        </authorList>
    </citation>
    <scope>GENOME REANNOTATION</scope>
    <source>
        <strain>cv. Nipponbare</strain>
    </source>
</reference>
<reference key="4">
    <citation type="journal article" date="2003" name="Science">
        <title>Collection, mapping, and annotation of over 28,000 cDNA clones from japonica rice.</title>
        <authorList>
            <consortium name="The rice full-length cDNA consortium"/>
        </authorList>
    </citation>
    <scope>NUCLEOTIDE SEQUENCE [LARGE SCALE MRNA]</scope>
    <source>
        <strain>cv. Nipponbare</strain>
    </source>
</reference>
<keyword id="KW-0238">DNA-binding</keyword>
<keyword id="KW-0539">Nucleus</keyword>
<keyword id="KW-1185">Reference proteome</keyword>
<keyword id="KW-0804">Transcription</keyword>
<keyword id="KW-0805">Transcription regulation</keyword>
<organism>
    <name type="scientific">Oryza sativa subsp. japonica</name>
    <name type="common">Rice</name>
    <dbReference type="NCBI Taxonomy" id="39947"/>
    <lineage>
        <taxon>Eukaryota</taxon>
        <taxon>Viridiplantae</taxon>
        <taxon>Streptophyta</taxon>
        <taxon>Embryophyta</taxon>
        <taxon>Tracheophyta</taxon>
        <taxon>Spermatophyta</taxon>
        <taxon>Magnoliopsida</taxon>
        <taxon>Liliopsida</taxon>
        <taxon>Poales</taxon>
        <taxon>Poaceae</taxon>
        <taxon>BOP clade</taxon>
        <taxon>Oryzoideae</taxon>
        <taxon>Oryzeae</taxon>
        <taxon>Oryzinae</taxon>
        <taxon>Oryza</taxon>
        <taxon>Oryza sativa</taxon>
    </lineage>
</organism>
<accession>Q6EU30</accession>
<accession>A0A0N7KFW0</accession>
<name>Y2835_ORYSJ</name>
<comment type="subcellular location">
    <subcellularLocation>
        <location evidence="1">Nucleus</location>
    </subcellularLocation>
</comment>
<proteinExistence type="evidence at transcript level"/>
<dbReference type="EMBL" id="AP004178">
    <property type="protein sequence ID" value="BAD27840.1"/>
    <property type="molecule type" value="Genomic_DNA"/>
</dbReference>
<dbReference type="EMBL" id="AP008208">
    <property type="protein sequence ID" value="BAF09668.1"/>
    <property type="molecule type" value="Genomic_DNA"/>
</dbReference>
<dbReference type="EMBL" id="AP014958">
    <property type="protein sequence ID" value="BAS80313.1"/>
    <property type="molecule type" value="Genomic_DNA"/>
</dbReference>
<dbReference type="EMBL" id="AK109908">
    <property type="protein sequence ID" value="BAG98956.1"/>
    <property type="molecule type" value="mRNA"/>
</dbReference>
<dbReference type="RefSeq" id="XP_015624169.1">
    <property type="nucleotide sequence ID" value="XM_015768683.1"/>
</dbReference>
<dbReference type="SMR" id="Q6EU30"/>
<dbReference type="FunCoup" id="Q6EU30">
    <property type="interactions" value="346"/>
</dbReference>
<dbReference type="PaxDb" id="39947-Q6EU30"/>
<dbReference type="EnsemblPlants" id="Os02t0683500-01">
    <property type="protein sequence ID" value="Os02t0683500-01"/>
    <property type="gene ID" value="Os02g0683500"/>
</dbReference>
<dbReference type="Gramene" id="Os02t0683500-01">
    <property type="protein sequence ID" value="Os02t0683500-01"/>
    <property type="gene ID" value="Os02g0683500"/>
</dbReference>
<dbReference type="KEGG" id="dosa:Os02g0683500"/>
<dbReference type="eggNOG" id="ENOG502QSHQ">
    <property type="taxonomic scope" value="Eukaryota"/>
</dbReference>
<dbReference type="HOGENOM" id="CLU_038898_3_0_1"/>
<dbReference type="InParanoid" id="Q6EU30"/>
<dbReference type="OMA" id="TSHYAPW"/>
<dbReference type="OrthoDB" id="2020802at2759"/>
<dbReference type="Proteomes" id="UP000000763">
    <property type="component" value="Chromosome 2"/>
</dbReference>
<dbReference type="Proteomes" id="UP000059680">
    <property type="component" value="Chromosome 2"/>
</dbReference>
<dbReference type="GO" id="GO:0005634">
    <property type="term" value="C:nucleus"/>
    <property type="evidence" value="ECO:0007669"/>
    <property type="project" value="UniProtKB-SubCell"/>
</dbReference>
<dbReference type="GO" id="GO:0003677">
    <property type="term" value="F:DNA binding"/>
    <property type="evidence" value="ECO:0007669"/>
    <property type="project" value="UniProtKB-KW"/>
</dbReference>
<dbReference type="GO" id="GO:0003700">
    <property type="term" value="F:DNA-binding transcription factor activity"/>
    <property type="evidence" value="ECO:0007669"/>
    <property type="project" value="InterPro"/>
</dbReference>
<dbReference type="CDD" id="cd10017">
    <property type="entry name" value="B3_DNA"/>
    <property type="match status" value="1"/>
</dbReference>
<dbReference type="FunFam" id="2.40.330.10:FF:000002">
    <property type="entry name" value="B3 domain-containing protein"/>
    <property type="match status" value="1"/>
</dbReference>
<dbReference type="Gene3D" id="2.40.330.10">
    <property type="entry name" value="DNA-binding pseudobarrel domain"/>
    <property type="match status" value="1"/>
</dbReference>
<dbReference type="InterPro" id="IPR003340">
    <property type="entry name" value="B3_DNA-bd"/>
</dbReference>
<dbReference type="InterPro" id="IPR015300">
    <property type="entry name" value="DNA-bd_pseudobarrel_sf"/>
</dbReference>
<dbReference type="InterPro" id="IPR044800">
    <property type="entry name" value="LEC2-like"/>
</dbReference>
<dbReference type="PANTHER" id="PTHR31140:SF129">
    <property type="entry name" value="B3 DOMAIN-CONTAINING PROTEIN OS02G0683500"/>
    <property type="match status" value="1"/>
</dbReference>
<dbReference type="PANTHER" id="PTHR31140">
    <property type="entry name" value="B3 DOMAIN-CONTAINING TRANSCRIPTION FACTOR ABI3"/>
    <property type="match status" value="1"/>
</dbReference>
<dbReference type="Pfam" id="PF02362">
    <property type="entry name" value="B3"/>
    <property type="match status" value="1"/>
</dbReference>
<dbReference type="SMART" id="SM01019">
    <property type="entry name" value="B3"/>
    <property type="match status" value="1"/>
</dbReference>
<dbReference type="SUPFAM" id="SSF101936">
    <property type="entry name" value="DNA-binding pseudobarrel domain"/>
    <property type="match status" value="1"/>
</dbReference>
<dbReference type="PROSITE" id="PS50863">
    <property type="entry name" value="B3"/>
    <property type="match status" value="1"/>
</dbReference>
<evidence type="ECO:0000255" key="1">
    <source>
        <dbReference type="PROSITE-ProRule" id="PRU00326"/>
    </source>
</evidence>
<evidence type="ECO:0000256" key="2">
    <source>
        <dbReference type="SAM" id="MobiDB-lite"/>
    </source>
</evidence>